<organism>
    <name type="scientific">Staphylococcus aureus (strain MW2)</name>
    <dbReference type="NCBI Taxonomy" id="196620"/>
    <lineage>
        <taxon>Bacteria</taxon>
        <taxon>Bacillati</taxon>
        <taxon>Bacillota</taxon>
        <taxon>Bacilli</taxon>
        <taxon>Bacillales</taxon>
        <taxon>Staphylococcaceae</taxon>
        <taxon>Staphylococcus</taxon>
    </lineage>
</organism>
<name>TYSY_STAAW</name>
<feature type="chain" id="PRO_0000141023" description="Thymidylate synthase">
    <location>
        <begin position="1"/>
        <end position="318"/>
    </location>
</feature>
<feature type="active site" description="Nucleophile" evidence="1">
    <location>
        <position position="201"/>
    </location>
</feature>
<feature type="binding site" description="in other chain" evidence="1">
    <location>
        <position position="26"/>
    </location>
    <ligand>
        <name>dUMP</name>
        <dbReference type="ChEBI" id="CHEBI:246422"/>
        <note>ligand shared between dimeric partners</note>
    </ligand>
</feature>
<feature type="binding site" evidence="1">
    <location>
        <begin position="181"/>
        <end position="182"/>
    </location>
    <ligand>
        <name>dUMP</name>
        <dbReference type="ChEBI" id="CHEBI:246422"/>
        <note>ligand shared between dimeric partners</note>
    </ligand>
</feature>
<feature type="binding site" description="in other chain" evidence="1">
    <location>
        <begin position="221"/>
        <end position="224"/>
    </location>
    <ligand>
        <name>dUMP</name>
        <dbReference type="ChEBI" id="CHEBI:246422"/>
        <note>ligand shared between dimeric partners</note>
    </ligand>
</feature>
<feature type="binding site" evidence="1">
    <location>
        <position position="224"/>
    </location>
    <ligand>
        <name>(6R)-5,10-methylene-5,6,7,8-tetrahydrofolate</name>
        <dbReference type="ChEBI" id="CHEBI:15636"/>
    </ligand>
</feature>
<feature type="binding site" description="in other chain" evidence="1">
    <location>
        <position position="232"/>
    </location>
    <ligand>
        <name>dUMP</name>
        <dbReference type="ChEBI" id="CHEBI:246422"/>
        <note>ligand shared between dimeric partners</note>
    </ligand>
</feature>
<feature type="binding site" description="in other chain" evidence="1">
    <location>
        <begin position="262"/>
        <end position="264"/>
    </location>
    <ligand>
        <name>dUMP</name>
        <dbReference type="ChEBI" id="CHEBI:246422"/>
        <note>ligand shared between dimeric partners</note>
    </ligand>
</feature>
<feature type="binding site" evidence="1">
    <location>
        <position position="317"/>
    </location>
    <ligand>
        <name>(6R)-5,10-methylene-5,6,7,8-tetrahydrofolate</name>
        <dbReference type="ChEBI" id="CHEBI:15636"/>
    </ligand>
</feature>
<evidence type="ECO:0000255" key="1">
    <source>
        <dbReference type="HAMAP-Rule" id="MF_00008"/>
    </source>
</evidence>
<sequence>MLNSFDAAYHSLCEEVLEIGNTRNDRTNTGTISKFGHQLRFDLSKGFPLLTTKKVSFKLVATELLWFIKGDTNIQYLLKYNNNIWNEWAFENYIKSDEYNGPDMTDFGHRALSDPEFNEQYKEQMKQFKQRILEDDTFAKQFGDLGNVYGKQWRDWVDKDGNHFDQLKTVIEQIKHNPDSRRHIVSAWNPTEIDTMALPPCHTMFQFYVQDGKLSCQLYQRSADIFLGVPFNIASYALLTHLIAKECGLEVGEFVHTFGDAHIYSNHIDAIQTQLARESFNPPTLKINSDKSIFDINYEDLEIVDYESHPAIKAPIAV</sequence>
<keyword id="KW-0963">Cytoplasm</keyword>
<keyword id="KW-0489">Methyltransferase</keyword>
<keyword id="KW-0545">Nucleotide biosynthesis</keyword>
<keyword id="KW-0808">Transferase</keyword>
<accession>P67048</accession>
<accession>Q99U61</accession>
<protein>
    <recommendedName>
        <fullName evidence="1">Thymidylate synthase</fullName>
        <shortName evidence="1">TS</shortName>
        <shortName evidence="1">TSase</shortName>
        <ecNumber evidence="1">2.1.1.45</ecNumber>
    </recommendedName>
</protein>
<dbReference type="EC" id="2.1.1.45" evidence="1"/>
<dbReference type="EMBL" id="BA000033">
    <property type="protein sequence ID" value="BAB95182.1"/>
    <property type="molecule type" value="Genomic_DNA"/>
</dbReference>
<dbReference type="RefSeq" id="WP_000934894.1">
    <property type="nucleotide sequence ID" value="NC_003923.1"/>
</dbReference>
<dbReference type="SMR" id="P67048"/>
<dbReference type="KEGG" id="sam:MW1317"/>
<dbReference type="HOGENOM" id="CLU_021669_0_2_9"/>
<dbReference type="UniPathway" id="UPA00575"/>
<dbReference type="GO" id="GO:0005829">
    <property type="term" value="C:cytosol"/>
    <property type="evidence" value="ECO:0007669"/>
    <property type="project" value="TreeGrafter"/>
</dbReference>
<dbReference type="GO" id="GO:0004799">
    <property type="term" value="F:thymidylate synthase activity"/>
    <property type="evidence" value="ECO:0007669"/>
    <property type="project" value="UniProtKB-UniRule"/>
</dbReference>
<dbReference type="GO" id="GO:0006231">
    <property type="term" value="P:dTMP biosynthetic process"/>
    <property type="evidence" value="ECO:0007669"/>
    <property type="project" value="UniProtKB-UniRule"/>
</dbReference>
<dbReference type="GO" id="GO:0006235">
    <property type="term" value="P:dTTP biosynthetic process"/>
    <property type="evidence" value="ECO:0007669"/>
    <property type="project" value="UniProtKB-UniRule"/>
</dbReference>
<dbReference type="GO" id="GO:0032259">
    <property type="term" value="P:methylation"/>
    <property type="evidence" value="ECO:0007669"/>
    <property type="project" value="UniProtKB-KW"/>
</dbReference>
<dbReference type="CDD" id="cd00351">
    <property type="entry name" value="TS_Pyrimidine_HMase"/>
    <property type="match status" value="1"/>
</dbReference>
<dbReference type="Gene3D" id="3.30.572.10">
    <property type="entry name" value="Thymidylate synthase/dCMP hydroxymethylase domain"/>
    <property type="match status" value="1"/>
</dbReference>
<dbReference type="HAMAP" id="MF_00008">
    <property type="entry name" value="Thymidy_synth_bact"/>
    <property type="match status" value="1"/>
</dbReference>
<dbReference type="InterPro" id="IPR045097">
    <property type="entry name" value="Thymidate_synth/dCMP_Mease"/>
</dbReference>
<dbReference type="InterPro" id="IPR023451">
    <property type="entry name" value="Thymidate_synth/dCMP_Mease_dom"/>
</dbReference>
<dbReference type="InterPro" id="IPR036926">
    <property type="entry name" value="Thymidate_synth/dCMP_Mease_sf"/>
</dbReference>
<dbReference type="InterPro" id="IPR000398">
    <property type="entry name" value="Thymidylate_synthase"/>
</dbReference>
<dbReference type="InterPro" id="IPR020940">
    <property type="entry name" value="Thymidylate_synthase_AS"/>
</dbReference>
<dbReference type="NCBIfam" id="NF002496">
    <property type="entry name" value="PRK01827.1-2"/>
    <property type="match status" value="1"/>
</dbReference>
<dbReference type="NCBIfam" id="TIGR03284">
    <property type="entry name" value="thym_sym"/>
    <property type="match status" value="1"/>
</dbReference>
<dbReference type="PANTHER" id="PTHR11548:SF9">
    <property type="entry name" value="THYMIDYLATE SYNTHASE"/>
    <property type="match status" value="1"/>
</dbReference>
<dbReference type="PANTHER" id="PTHR11548">
    <property type="entry name" value="THYMIDYLATE SYNTHASE 1"/>
    <property type="match status" value="1"/>
</dbReference>
<dbReference type="Pfam" id="PF00303">
    <property type="entry name" value="Thymidylat_synt"/>
    <property type="match status" value="1"/>
</dbReference>
<dbReference type="PRINTS" id="PR00108">
    <property type="entry name" value="THYMDSNTHASE"/>
</dbReference>
<dbReference type="SUPFAM" id="SSF55831">
    <property type="entry name" value="Thymidylate synthase/dCMP hydroxymethylase"/>
    <property type="match status" value="1"/>
</dbReference>
<dbReference type="PROSITE" id="PS00091">
    <property type="entry name" value="THYMIDYLATE_SYNTHASE"/>
    <property type="match status" value="1"/>
</dbReference>
<gene>
    <name evidence="1" type="primary">thyA</name>
    <name type="ordered locus">MW1317</name>
</gene>
<proteinExistence type="inferred from homology"/>
<reference key="1">
    <citation type="journal article" date="2002" name="Lancet">
        <title>Genome and virulence determinants of high virulence community-acquired MRSA.</title>
        <authorList>
            <person name="Baba T."/>
            <person name="Takeuchi F."/>
            <person name="Kuroda M."/>
            <person name="Yuzawa H."/>
            <person name="Aoki K."/>
            <person name="Oguchi A."/>
            <person name="Nagai Y."/>
            <person name="Iwama N."/>
            <person name="Asano K."/>
            <person name="Naimi T."/>
            <person name="Kuroda H."/>
            <person name="Cui L."/>
            <person name="Yamamoto K."/>
            <person name="Hiramatsu K."/>
        </authorList>
    </citation>
    <scope>NUCLEOTIDE SEQUENCE [LARGE SCALE GENOMIC DNA]</scope>
    <source>
        <strain>MW2</strain>
    </source>
</reference>
<comment type="function">
    <text evidence="1">Catalyzes the reductive methylation of 2'-deoxyuridine-5'-monophosphate (dUMP) to 2'-deoxythymidine-5'-monophosphate (dTMP) while utilizing 5,10-methylenetetrahydrofolate (mTHF) as the methyl donor and reductant in the reaction, yielding dihydrofolate (DHF) as a by-product. This enzymatic reaction provides an intracellular de novo source of dTMP, an essential precursor for DNA biosynthesis.</text>
</comment>
<comment type="catalytic activity">
    <reaction evidence="1">
        <text>dUMP + (6R)-5,10-methylene-5,6,7,8-tetrahydrofolate = 7,8-dihydrofolate + dTMP</text>
        <dbReference type="Rhea" id="RHEA:12104"/>
        <dbReference type="ChEBI" id="CHEBI:15636"/>
        <dbReference type="ChEBI" id="CHEBI:57451"/>
        <dbReference type="ChEBI" id="CHEBI:63528"/>
        <dbReference type="ChEBI" id="CHEBI:246422"/>
        <dbReference type="EC" id="2.1.1.45"/>
    </reaction>
</comment>
<comment type="pathway">
    <text evidence="1">Pyrimidine metabolism; dTTP biosynthesis.</text>
</comment>
<comment type="subunit">
    <text evidence="1">Homodimer.</text>
</comment>
<comment type="subcellular location">
    <subcellularLocation>
        <location evidence="1">Cytoplasm</location>
    </subcellularLocation>
</comment>
<comment type="similarity">
    <text evidence="1">Belongs to the thymidylate synthase family. Bacterial-type ThyA subfamily.</text>
</comment>